<proteinExistence type="inferred from homology"/>
<organism>
    <name type="scientific">Rhodococcus jostii (strain RHA1)</name>
    <dbReference type="NCBI Taxonomy" id="101510"/>
    <lineage>
        <taxon>Bacteria</taxon>
        <taxon>Bacillati</taxon>
        <taxon>Actinomycetota</taxon>
        <taxon>Actinomycetes</taxon>
        <taxon>Mycobacteriales</taxon>
        <taxon>Nocardiaceae</taxon>
        <taxon>Rhodococcus</taxon>
    </lineage>
</organism>
<reference key="1">
    <citation type="journal article" date="2006" name="Proc. Natl. Acad. Sci. U.S.A.">
        <title>The complete genome of Rhodococcus sp. RHA1 provides insights into a catabolic powerhouse.</title>
        <authorList>
            <person name="McLeod M.P."/>
            <person name="Warren R.L."/>
            <person name="Hsiao W.W.L."/>
            <person name="Araki N."/>
            <person name="Myhre M."/>
            <person name="Fernandes C."/>
            <person name="Miyazawa D."/>
            <person name="Wong W."/>
            <person name="Lillquist A.L."/>
            <person name="Wang D."/>
            <person name="Dosanjh M."/>
            <person name="Hara H."/>
            <person name="Petrescu A."/>
            <person name="Morin R.D."/>
            <person name="Yang G."/>
            <person name="Stott J.M."/>
            <person name="Schein J.E."/>
            <person name="Shin H."/>
            <person name="Smailus D."/>
            <person name="Siddiqui A.S."/>
            <person name="Marra M.A."/>
            <person name="Jones S.J.M."/>
            <person name="Holt R."/>
            <person name="Brinkman F.S.L."/>
            <person name="Miyauchi K."/>
            <person name="Fukuda M."/>
            <person name="Davies J.E."/>
            <person name="Mohn W.W."/>
            <person name="Eltis L.D."/>
        </authorList>
    </citation>
    <scope>NUCLEOTIDE SEQUENCE [LARGE SCALE GENOMIC DNA]</scope>
    <source>
        <strain>RHA1</strain>
    </source>
</reference>
<sequence length="73" mass="8489">MAKKDGAIEVEGRVVEPLPNAMFRIELENGHKVLAHISGKMRQHYIRILPEDRVVVELSPYDLSRGRIVYRYK</sequence>
<feature type="chain" id="PRO_0000263855" description="Translation initiation factor IF-1">
    <location>
        <begin position="1"/>
        <end position="73"/>
    </location>
</feature>
<feature type="domain" description="S1-like" evidence="1">
    <location>
        <begin position="1"/>
        <end position="73"/>
    </location>
</feature>
<evidence type="ECO:0000255" key="1">
    <source>
        <dbReference type="HAMAP-Rule" id="MF_00075"/>
    </source>
</evidence>
<accession>Q0S3F2</accession>
<protein>
    <recommendedName>
        <fullName evidence="1">Translation initiation factor IF-1</fullName>
    </recommendedName>
</protein>
<comment type="function">
    <text evidence="1">One of the essential components for the initiation of protein synthesis. Stabilizes the binding of IF-2 and IF-3 on the 30S subunit to which N-formylmethionyl-tRNA(fMet) subsequently binds. Helps modulate mRNA selection, yielding the 30S pre-initiation complex (PIC). Upon addition of the 50S ribosomal subunit IF-1, IF-2 and IF-3 are released leaving the mature 70S translation initiation complex.</text>
</comment>
<comment type="subunit">
    <text evidence="1">Component of the 30S ribosomal translation pre-initiation complex which assembles on the 30S ribosome in the order IF-2 and IF-3, IF-1 and N-formylmethionyl-tRNA(fMet); mRNA recruitment can occur at any time during PIC assembly.</text>
</comment>
<comment type="subcellular location">
    <subcellularLocation>
        <location evidence="1">Cytoplasm</location>
    </subcellularLocation>
</comment>
<comment type="similarity">
    <text evidence="1">Belongs to the IF-1 family.</text>
</comment>
<dbReference type="EMBL" id="CP000431">
    <property type="protein sequence ID" value="ABG97934.1"/>
    <property type="molecule type" value="Genomic_DNA"/>
</dbReference>
<dbReference type="RefSeq" id="WP_003418601.1">
    <property type="nucleotide sequence ID" value="NC_008268.1"/>
</dbReference>
<dbReference type="SMR" id="Q0S3F2"/>
<dbReference type="GeneID" id="98799387"/>
<dbReference type="KEGG" id="rha:RHA1_ro06157"/>
<dbReference type="eggNOG" id="COG0361">
    <property type="taxonomic scope" value="Bacteria"/>
</dbReference>
<dbReference type="HOGENOM" id="CLU_151267_1_0_11"/>
<dbReference type="OrthoDB" id="9803250at2"/>
<dbReference type="Proteomes" id="UP000008710">
    <property type="component" value="Chromosome"/>
</dbReference>
<dbReference type="GO" id="GO:0005829">
    <property type="term" value="C:cytosol"/>
    <property type="evidence" value="ECO:0007669"/>
    <property type="project" value="TreeGrafter"/>
</dbReference>
<dbReference type="GO" id="GO:0043022">
    <property type="term" value="F:ribosome binding"/>
    <property type="evidence" value="ECO:0007669"/>
    <property type="project" value="UniProtKB-UniRule"/>
</dbReference>
<dbReference type="GO" id="GO:0019843">
    <property type="term" value="F:rRNA binding"/>
    <property type="evidence" value="ECO:0007669"/>
    <property type="project" value="UniProtKB-UniRule"/>
</dbReference>
<dbReference type="GO" id="GO:0003743">
    <property type="term" value="F:translation initiation factor activity"/>
    <property type="evidence" value="ECO:0007669"/>
    <property type="project" value="UniProtKB-UniRule"/>
</dbReference>
<dbReference type="CDD" id="cd04451">
    <property type="entry name" value="S1_IF1"/>
    <property type="match status" value="1"/>
</dbReference>
<dbReference type="FunFam" id="2.40.50.140:FF:000002">
    <property type="entry name" value="Translation initiation factor IF-1"/>
    <property type="match status" value="1"/>
</dbReference>
<dbReference type="Gene3D" id="2.40.50.140">
    <property type="entry name" value="Nucleic acid-binding proteins"/>
    <property type="match status" value="1"/>
</dbReference>
<dbReference type="HAMAP" id="MF_00075">
    <property type="entry name" value="IF_1"/>
    <property type="match status" value="1"/>
</dbReference>
<dbReference type="InterPro" id="IPR012340">
    <property type="entry name" value="NA-bd_OB-fold"/>
</dbReference>
<dbReference type="InterPro" id="IPR006196">
    <property type="entry name" value="RNA-binding_domain_S1_IF1"/>
</dbReference>
<dbReference type="InterPro" id="IPR004368">
    <property type="entry name" value="TIF_IF1"/>
</dbReference>
<dbReference type="NCBIfam" id="TIGR00008">
    <property type="entry name" value="infA"/>
    <property type="match status" value="1"/>
</dbReference>
<dbReference type="PANTHER" id="PTHR33370">
    <property type="entry name" value="TRANSLATION INITIATION FACTOR IF-1, CHLOROPLASTIC"/>
    <property type="match status" value="1"/>
</dbReference>
<dbReference type="PANTHER" id="PTHR33370:SF1">
    <property type="entry name" value="TRANSLATION INITIATION FACTOR IF-1, CHLOROPLASTIC"/>
    <property type="match status" value="1"/>
</dbReference>
<dbReference type="Pfam" id="PF01176">
    <property type="entry name" value="eIF-1a"/>
    <property type="match status" value="1"/>
</dbReference>
<dbReference type="SUPFAM" id="SSF50249">
    <property type="entry name" value="Nucleic acid-binding proteins"/>
    <property type="match status" value="1"/>
</dbReference>
<dbReference type="PROSITE" id="PS50832">
    <property type="entry name" value="S1_IF1_TYPE"/>
    <property type="match status" value="1"/>
</dbReference>
<name>IF1_RHOJR</name>
<gene>
    <name evidence="1" type="primary">infA</name>
    <name type="ordered locus">RHA1_ro06157</name>
</gene>
<keyword id="KW-0963">Cytoplasm</keyword>
<keyword id="KW-0396">Initiation factor</keyword>
<keyword id="KW-0648">Protein biosynthesis</keyword>
<keyword id="KW-0694">RNA-binding</keyword>
<keyword id="KW-0699">rRNA-binding</keyword>